<accession>O66477</accession>
<keyword id="KW-0997">Cell inner membrane</keyword>
<keyword id="KW-1003">Cell membrane</keyword>
<keyword id="KW-0472">Membrane</keyword>
<keyword id="KW-0653">Protein transport</keyword>
<keyword id="KW-1185">Reference proteome</keyword>
<keyword id="KW-0811">Translocation</keyword>
<keyword id="KW-0812">Transmembrane</keyword>
<keyword id="KW-1133">Transmembrane helix</keyword>
<keyword id="KW-0813">Transport</keyword>
<sequence length="59" mass="6545">MHFPLPWQLILILLVILVIFGASKLPEVGKGLGEGIRNFKKALSGEEEEKGKEVKKEGE</sequence>
<gene>
    <name evidence="1" type="primary">tatA1</name>
    <name type="ordered locus">aq_064.2</name>
    <name type="ORF">aq_064B</name>
</gene>
<proteinExistence type="inferred from homology"/>
<name>TATA1_AQUAE</name>
<reference key="1">
    <citation type="journal article" date="1998" name="Nature">
        <title>The complete genome of the hyperthermophilic bacterium Aquifex aeolicus.</title>
        <authorList>
            <person name="Deckert G."/>
            <person name="Warren P.V."/>
            <person name="Gaasterland T."/>
            <person name="Young W.G."/>
            <person name="Lenox A.L."/>
            <person name="Graham D.E."/>
            <person name="Overbeek R."/>
            <person name="Snead M.A."/>
            <person name="Keller M."/>
            <person name="Aujay M."/>
            <person name="Huber R."/>
            <person name="Feldman R.A."/>
            <person name="Short J.M."/>
            <person name="Olsen G.J."/>
            <person name="Swanson R.V."/>
        </authorList>
    </citation>
    <scope>NUCLEOTIDE SEQUENCE [LARGE SCALE GENOMIC DNA]</scope>
    <source>
        <strain>VF5</strain>
    </source>
</reference>
<organism>
    <name type="scientific">Aquifex aeolicus (strain VF5)</name>
    <dbReference type="NCBI Taxonomy" id="224324"/>
    <lineage>
        <taxon>Bacteria</taxon>
        <taxon>Pseudomonadati</taxon>
        <taxon>Aquificota</taxon>
        <taxon>Aquificia</taxon>
        <taxon>Aquificales</taxon>
        <taxon>Aquificaceae</taxon>
        <taxon>Aquifex</taxon>
    </lineage>
</organism>
<dbReference type="EMBL" id="AE000657">
    <property type="protein sequence ID" value="AAC06450.1"/>
    <property type="molecule type" value="Genomic_DNA"/>
</dbReference>
<dbReference type="PIR" id="B70306">
    <property type="entry name" value="B70306"/>
</dbReference>
<dbReference type="RefSeq" id="NP_213037.1">
    <property type="nucleotide sequence ID" value="NC_000918.1"/>
</dbReference>
<dbReference type="RefSeq" id="WP_010879975.1">
    <property type="nucleotide sequence ID" value="NC_000918.1"/>
</dbReference>
<dbReference type="SMR" id="O66477"/>
<dbReference type="FunCoup" id="O66477">
    <property type="interactions" value="404"/>
</dbReference>
<dbReference type="STRING" id="224324.aq_064b"/>
<dbReference type="EnsemblBacteria" id="AAC06450">
    <property type="protein sequence ID" value="AAC06450"/>
    <property type="gene ID" value="aq_064b"/>
</dbReference>
<dbReference type="KEGG" id="aae:aq_064b"/>
<dbReference type="PATRIC" id="fig|224324.8.peg.54"/>
<dbReference type="eggNOG" id="COG1826">
    <property type="taxonomic scope" value="Bacteria"/>
</dbReference>
<dbReference type="HOGENOM" id="CLU_086034_6_2_0"/>
<dbReference type="InParanoid" id="O66477"/>
<dbReference type="Proteomes" id="UP000000798">
    <property type="component" value="Chromosome"/>
</dbReference>
<dbReference type="GO" id="GO:0033281">
    <property type="term" value="C:TAT protein transport complex"/>
    <property type="evidence" value="ECO:0007669"/>
    <property type="project" value="UniProtKB-UniRule"/>
</dbReference>
<dbReference type="GO" id="GO:0008320">
    <property type="term" value="F:protein transmembrane transporter activity"/>
    <property type="evidence" value="ECO:0007669"/>
    <property type="project" value="UniProtKB-UniRule"/>
</dbReference>
<dbReference type="GO" id="GO:0043953">
    <property type="term" value="P:protein transport by the Tat complex"/>
    <property type="evidence" value="ECO:0007669"/>
    <property type="project" value="UniProtKB-UniRule"/>
</dbReference>
<dbReference type="Gene3D" id="1.20.5.3310">
    <property type="match status" value="1"/>
</dbReference>
<dbReference type="HAMAP" id="MF_00236">
    <property type="entry name" value="TatA_E"/>
    <property type="match status" value="1"/>
</dbReference>
<dbReference type="InterPro" id="IPR003369">
    <property type="entry name" value="TatA/B/E"/>
</dbReference>
<dbReference type="InterPro" id="IPR006312">
    <property type="entry name" value="TatA/E"/>
</dbReference>
<dbReference type="NCBIfam" id="TIGR01411">
    <property type="entry name" value="tatAE"/>
    <property type="match status" value="1"/>
</dbReference>
<dbReference type="PANTHER" id="PTHR42982">
    <property type="entry name" value="SEC-INDEPENDENT PROTEIN TRANSLOCASE PROTEIN TATA"/>
    <property type="match status" value="1"/>
</dbReference>
<dbReference type="PANTHER" id="PTHR42982:SF1">
    <property type="entry name" value="SEC-INDEPENDENT PROTEIN TRANSLOCASE PROTEIN TATA"/>
    <property type="match status" value="1"/>
</dbReference>
<dbReference type="Pfam" id="PF02416">
    <property type="entry name" value="TatA_B_E"/>
    <property type="match status" value="1"/>
</dbReference>
<protein>
    <recommendedName>
        <fullName evidence="1">Sec-independent protein translocase protein TatA 1</fullName>
    </recommendedName>
</protein>
<feature type="chain" id="PRO_0000097972" description="Sec-independent protein translocase protein TatA 1">
    <location>
        <begin position="1"/>
        <end position="59"/>
    </location>
</feature>
<feature type="transmembrane region" description="Helical" evidence="1">
    <location>
        <begin position="3"/>
        <end position="23"/>
    </location>
</feature>
<comment type="function">
    <text evidence="1">Part of the twin-arginine translocation (Tat) system that transports large folded proteins containing a characteristic twin-arginine motif in their signal peptide across membranes. TatA could form the protein-conducting channel of the Tat system.</text>
</comment>
<comment type="subunit">
    <text evidence="1">Forms a complex with TatC.</text>
</comment>
<comment type="subcellular location">
    <subcellularLocation>
        <location evidence="1">Cell inner membrane</location>
        <topology evidence="1">Single-pass membrane protein</topology>
    </subcellularLocation>
</comment>
<comment type="similarity">
    <text evidence="1">Belongs to the TatA/E family.</text>
</comment>
<evidence type="ECO:0000255" key="1">
    <source>
        <dbReference type="HAMAP-Rule" id="MF_00236"/>
    </source>
</evidence>